<reference key="1">
    <citation type="journal article" date="2005" name="Science">
        <title>The transcriptional landscape of the mammalian genome.</title>
        <authorList>
            <person name="Carninci P."/>
            <person name="Kasukawa T."/>
            <person name="Katayama S."/>
            <person name="Gough J."/>
            <person name="Frith M.C."/>
            <person name="Maeda N."/>
            <person name="Oyama R."/>
            <person name="Ravasi T."/>
            <person name="Lenhard B."/>
            <person name="Wells C."/>
            <person name="Kodzius R."/>
            <person name="Shimokawa K."/>
            <person name="Bajic V.B."/>
            <person name="Brenner S.E."/>
            <person name="Batalov S."/>
            <person name="Forrest A.R."/>
            <person name="Zavolan M."/>
            <person name="Davis M.J."/>
            <person name="Wilming L.G."/>
            <person name="Aidinis V."/>
            <person name="Allen J.E."/>
            <person name="Ambesi-Impiombato A."/>
            <person name="Apweiler R."/>
            <person name="Aturaliya R.N."/>
            <person name="Bailey T.L."/>
            <person name="Bansal M."/>
            <person name="Baxter L."/>
            <person name="Beisel K.W."/>
            <person name="Bersano T."/>
            <person name="Bono H."/>
            <person name="Chalk A.M."/>
            <person name="Chiu K.P."/>
            <person name="Choudhary V."/>
            <person name="Christoffels A."/>
            <person name="Clutterbuck D.R."/>
            <person name="Crowe M.L."/>
            <person name="Dalla E."/>
            <person name="Dalrymple B.P."/>
            <person name="de Bono B."/>
            <person name="Della Gatta G."/>
            <person name="di Bernardo D."/>
            <person name="Down T."/>
            <person name="Engstrom P."/>
            <person name="Fagiolini M."/>
            <person name="Faulkner G."/>
            <person name="Fletcher C.F."/>
            <person name="Fukushima T."/>
            <person name="Furuno M."/>
            <person name="Futaki S."/>
            <person name="Gariboldi M."/>
            <person name="Georgii-Hemming P."/>
            <person name="Gingeras T.R."/>
            <person name="Gojobori T."/>
            <person name="Green R.E."/>
            <person name="Gustincich S."/>
            <person name="Harbers M."/>
            <person name="Hayashi Y."/>
            <person name="Hensch T.K."/>
            <person name="Hirokawa N."/>
            <person name="Hill D."/>
            <person name="Huminiecki L."/>
            <person name="Iacono M."/>
            <person name="Ikeo K."/>
            <person name="Iwama A."/>
            <person name="Ishikawa T."/>
            <person name="Jakt M."/>
            <person name="Kanapin A."/>
            <person name="Katoh M."/>
            <person name="Kawasawa Y."/>
            <person name="Kelso J."/>
            <person name="Kitamura H."/>
            <person name="Kitano H."/>
            <person name="Kollias G."/>
            <person name="Krishnan S.P."/>
            <person name="Kruger A."/>
            <person name="Kummerfeld S.K."/>
            <person name="Kurochkin I.V."/>
            <person name="Lareau L.F."/>
            <person name="Lazarevic D."/>
            <person name="Lipovich L."/>
            <person name="Liu J."/>
            <person name="Liuni S."/>
            <person name="McWilliam S."/>
            <person name="Madan Babu M."/>
            <person name="Madera M."/>
            <person name="Marchionni L."/>
            <person name="Matsuda H."/>
            <person name="Matsuzawa S."/>
            <person name="Miki H."/>
            <person name="Mignone F."/>
            <person name="Miyake S."/>
            <person name="Morris K."/>
            <person name="Mottagui-Tabar S."/>
            <person name="Mulder N."/>
            <person name="Nakano N."/>
            <person name="Nakauchi H."/>
            <person name="Ng P."/>
            <person name="Nilsson R."/>
            <person name="Nishiguchi S."/>
            <person name="Nishikawa S."/>
            <person name="Nori F."/>
            <person name="Ohara O."/>
            <person name="Okazaki Y."/>
            <person name="Orlando V."/>
            <person name="Pang K.C."/>
            <person name="Pavan W.J."/>
            <person name="Pavesi G."/>
            <person name="Pesole G."/>
            <person name="Petrovsky N."/>
            <person name="Piazza S."/>
            <person name="Reed J."/>
            <person name="Reid J.F."/>
            <person name="Ring B.Z."/>
            <person name="Ringwald M."/>
            <person name="Rost B."/>
            <person name="Ruan Y."/>
            <person name="Salzberg S.L."/>
            <person name="Sandelin A."/>
            <person name="Schneider C."/>
            <person name="Schoenbach C."/>
            <person name="Sekiguchi K."/>
            <person name="Semple C.A."/>
            <person name="Seno S."/>
            <person name="Sessa L."/>
            <person name="Sheng Y."/>
            <person name="Shibata Y."/>
            <person name="Shimada H."/>
            <person name="Shimada K."/>
            <person name="Silva D."/>
            <person name="Sinclair B."/>
            <person name="Sperling S."/>
            <person name="Stupka E."/>
            <person name="Sugiura K."/>
            <person name="Sultana R."/>
            <person name="Takenaka Y."/>
            <person name="Taki K."/>
            <person name="Tammoja K."/>
            <person name="Tan S.L."/>
            <person name="Tang S."/>
            <person name="Taylor M.S."/>
            <person name="Tegner J."/>
            <person name="Teichmann S.A."/>
            <person name="Ueda H.R."/>
            <person name="van Nimwegen E."/>
            <person name="Verardo R."/>
            <person name="Wei C.L."/>
            <person name="Yagi K."/>
            <person name="Yamanishi H."/>
            <person name="Zabarovsky E."/>
            <person name="Zhu S."/>
            <person name="Zimmer A."/>
            <person name="Hide W."/>
            <person name="Bult C."/>
            <person name="Grimmond S.M."/>
            <person name="Teasdale R.D."/>
            <person name="Liu E.T."/>
            <person name="Brusic V."/>
            <person name="Quackenbush J."/>
            <person name="Wahlestedt C."/>
            <person name="Mattick J.S."/>
            <person name="Hume D.A."/>
            <person name="Kai C."/>
            <person name="Sasaki D."/>
            <person name="Tomaru Y."/>
            <person name="Fukuda S."/>
            <person name="Kanamori-Katayama M."/>
            <person name="Suzuki M."/>
            <person name="Aoki J."/>
            <person name="Arakawa T."/>
            <person name="Iida J."/>
            <person name="Imamura K."/>
            <person name="Itoh M."/>
            <person name="Kato T."/>
            <person name="Kawaji H."/>
            <person name="Kawagashira N."/>
            <person name="Kawashima T."/>
            <person name="Kojima M."/>
            <person name="Kondo S."/>
            <person name="Konno H."/>
            <person name="Nakano K."/>
            <person name="Ninomiya N."/>
            <person name="Nishio T."/>
            <person name="Okada M."/>
            <person name="Plessy C."/>
            <person name="Shibata K."/>
            <person name="Shiraki T."/>
            <person name="Suzuki S."/>
            <person name="Tagami M."/>
            <person name="Waki K."/>
            <person name="Watahiki A."/>
            <person name="Okamura-Oho Y."/>
            <person name="Suzuki H."/>
            <person name="Kawai J."/>
            <person name="Hayashizaki Y."/>
        </authorList>
    </citation>
    <scope>NUCLEOTIDE SEQUENCE [LARGE SCALE MRNA] (ISOFORMS 1 AND 2)</scope>
    <source>
        <strain>C57BL/6J</strain>
        <tissue>Egg</tissue>
        <tissue>Mammary gland</tissue>
        <tissue>Placenta</tissue>
    </source>
</reference>
<reference key="2">
    <citation type="journal article" date="2004" name="Genome Res.">
        <title>The status, quality, and expansion of the NIH full-length cDNA project: the Mammalian Gene Collection (MGC).</title>
        <authorList>
            <consortium name="The MGC Project Team"/>
        </authorList>
    </citation>
    <scope>NUCLEOTIDE SEQUENCE [LARGE SCALE MRNA] (ISOFORM 1)</scope>
    <source>
        <strain>Czech II</strain>
        <strain>FVB/N</strain>
        <tissue>Mammary tumor</tissue>
    </source>
</reference>
<reference key="3">
    <citation type="journal article" date="2010" name="Cell">
        <title>A tissue-specific atlas of mouse protein phosphorylation and expression.</title>
        <authorList>
            <person name="Huttlin E.L."/>
            <person name="Jedrychowski M.P."/>
            <person name="Elias J.E."/>
            <person name="Goswami T."/>
            <person name="Rad R."/>
            <person name="Beausoleil S.A."/>
            <person name="Villen J."/>
            <person name="Haas W."/>
            <person name="Sowa M.E."/>
            <person name="Gygi S.P."/>
        </authorList>
    </citation>
    <scope>PHOSPHORYLATION [LARGE SCALE ANALYSIS] AT SER-41</scope>
    <scope>IDENTIFICATION BY MASS SPECTROMETRY [LARGE SCALE ANALYSIS]</scope>
    <source>
        <tissue>Brain</tissue>
        <tissue>Spleen</tissue>
        <tissue>Testis</tissue>
    </source>
</reference>
<feature type="chain" id="PRO_0000304628" description="Protein misato homolog 1">
    <location>
        <begin position="1"/>
        <end position="556"/>
    </location>
</feature>
<feature type="modified residue" description="Phosphoserine" evidence="4">
    <location>
        <position position="41"/>
    </location>
</feature>
<feature type="splice variant" id="VSP_028057" description="In isoform 2." evidence="2">
    <location>
        <begin position="364"/>
        <end position="475"/>
    </location>
</feature>
<feature type="sequence conflict" description="In Ref. 1; BAE37273." evidence="3" ref="1">
    <original>H</original>
    <variation>D</variation>
    <location>
        <position position="23"/>
    </location>
</feature>
<feature type="sequence conflict" description="In Ref. 1; BAE37273/BAE39645." evidence="3" ref="1">
    <original>E</original>
    <variation>D</variation>
    <location>
        <position position="106"/>
    </location>
</feature>
<feature type="sequence conflict" description="In Ref. 1; BAE37273/BAE39645 and 2; AAH08103." evidence="3" ref="1 2">
    <original>H</original>
    <variation>Q</variation>
    <location>
        <position position="109"/>
    </location>
</feature>
<feature type="sequence conflict" description="In Ref. 1; BAE38651." evidence="3" ref="1">
    <original>G</original>
    <variation>S</variation>
    <location>
        <position position="228"/>
    </location>
</feature>
<feature type="sequence conflict" description="In Ref. 1; BAE38651." evidence="3" ref="1">
    <original>V</original>
    <variation>A</variation>
    <location>
        <position position="365"/>
    </location>
</feature>
<feature type="sequence conflict" description="In Ref. 1; BAE38651." evidence="3" ref="1">
    <original>S</original>
    <variation>T</variation>
    <location>
        <position position="553"/>
    </location>
</feature>
<proteinExistence type="evidence at protein level"/>
<keyword id="KW-0025">Alternative splicing</keyword>
<keyword id="KW-0963">Cytoplasm</keyword>
<keyword id="KW-0472">Membrane</keyword>
<keyword id="KW-0496">Mitochondrion</keyword>
<keyword id="KW-1000">Mitochondrion outer membrane</keyword>
<keyword id="KW-0597">Phosphoprotein</keyword>
<keyword id="KW-1185">Reference proteome</keyword>
<protein>
    <recommendedName>
        <fullName>Protein misato homolog 1</fullName>
    </recommendedName>
</protein>
<evidence type="ECO:0000250" key="1">
    <source>
        <dbReference type="UniProtKB" id="Q9BUK6"/>
    </source>
</evidence>
<evidence type="ECO:0000303" key="2">
    <source>
    </source>
</evidence>
<evidence type="ECO:0000305" key="3"/>
<evidence type="ECO:0007744" key="4">
    <source>
    </source>
</evidence>
<name>MSTO1_MOUSE</name>
<comment type="function">
    <text evidence="1">Involved in the regulation of mitochondrial distribution and morphology. Required for mitochondrial fusion and mitochondrial network formation.</text>
</comment>
<comment type="subcellular location">
    <subcellularLocation>
        <location evidence="1">Mitochondrion outer membrane</location>
    </subcellularLocation>
    <subcellularLocation>
        <location evidence="1">Cytoplasm</location>
    </subcellularLocation>
</comment>
<comment type="alternative products">
    <event type="alternative splicing"/>
    <isoform>
        <id>Q2YDW2-1</id>
        <name>1</name>
        <sequence type="displayed"/>
    </isoform>
    <isoform>
        <id>Q2YDW2-2</id>
        <name>2</name>
        <sequence type="described" ref="VSP_028057"/>
    </isoform>
</comment>
<comment type="similarity">
    <text evidence="3">Belongs to the misato family.</text>
</comment>
<accession>Q2YDW2</accession>
<accession>Q3TJ50</accession>
<accession>Q3TLZ1</accession>
<accession>Q3TQV9</accession>
<accession>Q922H6</accession>
<gene>
    <name type="primary">Msto1</name>
</gene>
<dbReference type="EMBL" id="AK163280">
    <property type="protein sequence ID" value="BAE37273.1"/>
    <property type="molecule type" value="mRNA"/>
</dbReference>
<dbReference type="EMBL" id="AK166236">
    <property type="protein sequence ID" value="BAE38651.1"/>
    <property type="molecule type" value="mRNA"/>
</dbReference>
<dbReference type="EMBL" id="AK167586">
    <property type="protein sequence ID" value="BAE39645.1"/>
    <property type="molecule type" value="mRNA"/>
</dbReference>
<dbReference type="EMBL" id="BC008103">
    <property type="protein sequence ID" value="AAH08103.1"/>
    <property type="molecule type" value="mRNA"/>
</dbReference>
<dbReference type="EMBL" id="BC108354">
    <property type="protein sequence ID" value="AAI08355.1"/>
    <property type="molecule type" value="mRNA"/>
</dbReference>
<dbReference type="CCDS" id="CCDS17485.1">
    <molecule id="Q2YDW2-1"/>
</dbReference>
<dbReference type="RefSeq" id="NP_659147.2">
    <property type="nucleotide sequence ID" value="NM_144898.2"/>
</dbReference>
<dbReference type="BioGRID" id="230855">
    <property type="interactions" value="5"/>
</dbReference>
<dbReference type="FunCoup" id="Q2YDW2">
    <property type="interactions" value="2371"/>
</dbReference>
<dbReference type="IntAct" id="Q2YDW2">
    <property type="interactions" value="2"/>
</dbReference>
<dbReference type="MINT" id="Q2YDW2"/>
<dbReference type="STRING" id="10090.ENSMUSP00000115645"/>
<dbReference type="iPTMnet" id="Q2YDW2"/>
<dbReference type="PhosphoSitePlus" id="Q2YDW2"/>
<dbReference type="PaxDb" id="10090-ENSMUSP00000115645"/>
<dbReference type="PeptideAtlas" id="Q2YDW2"/>
<dbReference type="ProteomicsDB" id="287508">
    <molecule id="Q2YDW2-1"/>
</dbReference>
<dbReference type="ProteomicsDB" id="287509">
    <molecule id="Q2YDW2-2"/>
</dbReference>
<dbReference type="Pumba" id="Q2YDW2"/>
<dbReference type="GeneID" id="229524"/>
<dbReference type="KEGG" id="mmu:229524"/>
<dbReference type="AGR" id="MGI:2385175"/>
<dbReference type="CTD" id="55154"/>
<dbReference type="MGI" id="MGI:2385175">
    <property type="gene designation" value="Msto1"/>
</dbReference>
<dbReference type="eggNOG" id="KOG2530">
    <property type="taxonomic scope" value="Eukaryota"/>
</dbReference>
<dbReference type="InParanoid" id="Q2YDW2"/>
<dbReference type="OrthoDB" id="39571at9989"/>
<dbReference type="BioGRID-ORCS" id="229524">
    <property type="hits" value="23 hits in 82 CRISPR screens"/>
</dbReference>
<dbReference type="ChiTaRS" id="Msto1">
    <property type="organism name" value="mouse"/>
</dbReference>
<dbReference type="PRO" id="PR:Q2YDW2"/>
<dbReference type="Proteomes" id="UP000000589">
    <property type="component" value="Unplaced"/>
</dbReference>
<dbReference type="RNAct" id="Q2YDW2">
    <property type="molecule type" value="protein"/>
</dbReference>
<dbReference type="GO" id="GO:0005741">
    <property type="term" value="C:mitochondrial outer membrane"/>
    <property type="evidence" value="ECO:0000250"/>
    <property type="project" value="UniProtKB"/>
</dbReference>
<dbReference type="GO" id="GO:0048311">
    <property type="term" value="P:mitochondrion distribution"/>
    <property type="evidence" value="ECO:0000250"/>
    <property type="project" value="UniProtKB"/>
</dbReference>
<dbReference type="GO" id="GO:0007005">
    <property type="term" value="P:mitochondrion organization"/>
    <property type="evidence" value="ECO:0000250"/>
    <property type="project" value="UniProtKB"/>
</dbReference>
<dbReference type="CDD" id="cd06060">
    <property type="entry name" value="misato"/>
    <property type="match status" value="1"/>
</dbReference>
<dbReference type="Gene3D" id="3.40.50.1440">
    <property type="entry name" value="Tubulin/FtsZ, GTPase domain"/>
    <property type="match status" value="1"/>
</dbReference>
<dbReference type="InterPro" id="IPR049942">
    <property type="entry name" value="DML1/Misato"/>
</dbReference>
<dbReference type="InterPro" id="IPR029209">
    <property type="entry name" value="DML1/Misato_tubulin"/>
</dbReference>
<dbReference type="InterPro" id="IPR019605">
    <property type="entry name" value="Misato_II_tubulin-like"/>
</dbReference>
<dbReference type="InterPro" id="IPR036525">
    <property type="entry name" value="Tubulin/FtsZ_GTPase_sf"/>
</dbReference>
<dbReference type="PANTHER" id="PTHR13391">
    <property type="entry name" value="MITOCHONDRIAL DISTRIBUTION REGULATOR MISATO"/>
    <property type="match status" value="1"/>
</dbReference>
<dbReference type="PANTHER" id="PTHR13391:SF0">
    <property type="entry name" value="PROTEIN MISATO HOMOLOG 1"/>
    <property type="match status" value="1"/>
</dbReference>
<dbReference type="Pfam" id="PF10644">
    <property type="entry name" value="Misat_Tub_SegII"/>
    <property type="match status" value="1"/>
</dbReference>
<dbReference type="Pfam" id="PF14881">
    <property type="entry name" value="Tubulin_3"/>
    <property type="match status" value="1"/>
</dbReference>
<dbReference type="SUPFAM" id="SSF52490">
    <property type="entry name" value="Tubulin nucleotide-binding domain-like"/>
    <property type="match status" value="1"/>
</dbReference>
<organism>
    <name type="scientific">Mus musculus</name>
    <name type="common">Mouse</name>
    <dbReference type="NCBI Taxonomy" id="10090"/>
    <lineage>
        <taxon>Eukaryota</taxon>
        <taxon>Metazoa</taxon>
        <taxon>Chordata</taxon>
        <taxon>Craniata</taxon>
        <taxon>Vertebrata</taxon>
        <taxon>Euteleostomi</taxon>
        <taxon>Mammalia</taxon>
        <taxon>Eutheria</taxon>
        <taxon>Euarchontoglires</taxon>
        <taxon>Glires</taxon>
        <taxon>Rodentia</taxon>
        <taxon>Myomorpha</taxon>
        <taxon>Muroidea</taxon>
        <taxon>Muridae</taxon>
        <taxon>Murinae</taxon>
        <taxon>Mus</taxon>
        <taxon>Mus</taxon>
    </lineage>
</organism>
<sequence>MAGGAREVLTLQLGHFAGFVGAHWWNQQDAALGRMAEDEESPGELCPDVLYRTGRTLHGQETYTPRLILMDLKGSLNTLKEEGNLYRDRQLEAAVAWQGKLSTHREDAHPKNPNLQGLLSAEGVRSSDGAWRAKLIQNIQNGKENSIKVWSDFLRVHLHPRSICVIHKYHHDGETGRLEAFGQGESVLKEPRYLEELEDRLHFYVEECDYLQGFQLLCDLHDGFSGVGAKTAELLQDEYAGRGVLTWGLLPGPYSLGEPQKNIYRLLNTAFGLVHLTGYSSFVCPLSLGGNLGLRPKPPVNFPSLHYDATLPFHCSAILATALDTVTVPYRLRSSMVTMAHLADVLSFSGKKVVTAEAIIPFPLVRGQSLPDILTQLGEATPWTSLSACGDSAGHRCFAQSVVLRGIDRASHTSKLNPGTPLPSALHACASGEEVLAQYLQQQHPRVLSSSHLLLTPCKVAPPYPHFFSSFSQKGLAMDSTPKGAAVQSIPVFGALRSTSSLHRTLGDLAEELSRLDLRRWASFMDAGVEQDDMEEMLHELHRLAQCYQEGDSLSN</sequence>